<sequence>MAVGKNKRISKGKKGGKKKAADPFSKKDWYDIKAPSVFQVKNVGKTLVSRTQGTKIASEGLKHRVFEISLADLQGDEDNAFRKIRLRAEDVQGKNVLTNFYGMDFTTDKLRSLVRKWQTLIEAHVDVKTTDNYTLRMFCIGFTKRRSNQVKRTCYAQSSQIRQIRRKMREIMVNQATSCDLKELVRKFIPEMIGKEIEKATSSIYPLQNVFIRKVKILKSPKFDLGKLMEVHGDYSEDVGTKVESPADETVVEGTPEIVGA</sequence>
<proteinExistence type="evidence at transcript level"/>
<name>RS3A_CICAR</name>
<accession>Q8GTE3</accession>
<organism>
    <name type="scientific">Cicer arietinum</name>
    <name type="common">Chickpea</name>
    <name type="synonym">Garbanzo</name>
    <dbReference type="NCBI Taxonomy" id="3827"/>
    <lineage>
        <taxon>Eukaryota</taxon>
        <taxon>Viridiplantae</taxon>
        <taxon>Streptophyta</taxon>
        <taxon>Embryophyta</taxon>
        <taxon>Tracheophyta</taxon>
        <taxon>Spermatophyta</taxon>
        <taxon>Magnoliopsida</taxon>
        <taxon>eudicotyledons</taxon>
        <taxon>Gunneridae</taxon>
        <taxon>Pentapetalae</taxon>
        <taxon>rosids</taxon>
        <taxon>fabids</taxon>
        <taxon>Fabales</taxon>
        <taxon>Fabaceae</taxon>
        <taxon>Papilionoideae</taxon>
        <taxon>50 kb inversion clade</taxon>
        <taxon>NPAAA clade</taxon>
        <taxon>Hologalegina</taxon>
        <taxon>IRL clade</taxon>
        <taxon>Cicereae</taxon>
        <taxon>Cicer</taxon>
    </lineage>
</organism>
<keyword id="KW-0963">Cytoplasm</keyword>
<keyword id="KW-1185">Reference proteome</keyword>
<keyword id="KW-0687">Ribonucleoprotein</keyword>
<keyword id="KW-0689">Ribosomal protein</keyword>
<dbReference type="EMBL" id="AJ515028">
    <property type="protein sequence ID" value="CAD56219.1"/>
    <property type="molecule type" value="mRNA"/>
</dbReference>
<dbReference type="RefSeq" id="NP_001265990.1">
    <property type="nucleotide sequence ID" value="NM_001279061.1"/>
</dbReference>
<dbReference type="SMR" id="Q8GTE3"/>
<dbReference type="STRING" id="3827.Q8GTE3"/>
<dbReference type="PaxDb" id="3827-XP_004511369.1"/>
<dbReference type="GeneID" id="101513556"/>
<dbReference type="KEGG" id="cam:101513556"/>
<dbReference type="eggNOG" id="KOG1628">
    <property type="taxonomic scope" value="Eukaryota"/>
</dbReference>
<dbReference type="OrthoDB" id="9834376at2759"/>
<dbReference type="Proteomes" id="UP000087171">
    <property type="component" value="Chromosome Ca8"/>
</dbReference>
<dbReference type="GO" id="GO:0022627">
    <property type="term" value="C:cytosolic small ribosomal subunit"/>
    <property type="evidence" value="ECO:0007669"/>
    <property type="project" value="UniProtKB-UniRule"/>
</dbReference>
<dbReference type="GO" id="GO:0003735">
    <property type="term" value="F:structural constituent of ribosome"/>
    <property type="evidence" value="ECO:0007669"/>
    <property type="project" value="UniProtKB-UniRule"/>
</dbReference>
<dbReference type="GO" id="GO:0006412">
    <property type="term" value="P:translation"/>
    <property type="evidence" value="ECO:0007669"/>
    <property type="project" value="UniProtKB-UniRule"/>
</dbReference>
<dbReference type="HAMAP" id="MF_03122">
    <property type="entry name" value="Ribosomal_eS1_euk"/>
    <property type="match status" value="1"/>
</dbReference>
<dbReference type="InterPro" id="IPR001593">
    <property type="entry name" value="Ribosomal_eS1"/>
</dbReference>
<dbReference type="InterPro" id="IPR018281">
    <property type="entry name" value="Ribosomal_eS1_CS"/>
</dbReference>
<dbReference type="InterPro" id="IPR027500">
    <property type="entry name" value="Ribosomal_eS1_euk"/>
</dbReference>
<dbReference type="PANTHER" id="PTHR11830">
    <property type="entry name" value="40S RIBOSOMAL PROTEIN S3A"/>
    <property type="match status" value="1"/>
</dbReference>
<dbReference type="Pfam" id="PF01015">
    <property type="entry name" value="Ribosomal_S3Ae"/>
    <property type="match status" value="1"/>
</dbReference>
<dbReference type="SMART" id="SM01397">
    <property type="entry name" value="Ribosomal_S3Ae"/>
    <property type="match status" value="1"/>
</dbReference>
<dbReference type="PROSITE" id="PS01191">
    <property type="entry name" value="RIBOSOMAL_S3AE"/>
    <property type="match status" value="1"/>
</dbReference>
<feature type="initiator methionine" description="Removed" evidence="1">
    <location>
        <position position="1"/>
    </location>
</feature>
<feature type="chain" id="PRO_0000389328" description="Small ribosomal subunit protein eS1">
    <location>
        <begin position="2"/>
        <end position="261"/>
    </location>
</feature>
<feature type="region of interest" description="Disordered" evidence="2">
    <location>
        <begin position="1"/>
        <end position="22"/>
    </location>
</feature>
<feature type="compositionally biased region" description="Basic residues" evidence="2">
    <location>
        <begin position="1"/>
        <end position="18"/>
    </location>
</feature>
<reference key="1">
    <citation type="submission" date="2002-10" db="EMBL/GenBank/DDBJ databases">
        <title>A ribosomal protein S3a is expressed in chickpea epicotyls.</title>
        <authorList>
            <person name="Dopico B."/>
            <person name="Martin J.I."/>
            <person name="Labrador E."/>
        </authorList>
    </citation>
    <scope>NUCLEOTIDE SEQUENCE [MRNA]</scope>
    <source>
        <tissue>Etiolated epicotyl</tissue>
    </source>
</reference>
<evidence type="ECO:0000255" key="1">
    <source>
        <dbReference type="HAMAP-Rule" id="MF_03122"/>
    </source>
</evidence>
<evidence type="ECO:0000256" key="2">
    <source>
        <dbReference type="SAM" id="MobiDB-lite"/>
    </source>
</evidence>
<evidence type="ECO:0000305" key="3"/>
<comment type="subunit">
    <text evidence="1">Component of the small ribosomal subunit. Mature ribosomes consist of a small (40S) and a large (60S) subunit. The 40S subunit contains about 33 different proteins and 1 molecule of RNA (18S). The 60S subunit contains about 49 different proteins and 3 molecules of RNA (25S, 5.8S and 5S).</text>
</comment>
<comment type="subcellular location">
    <subcellularLocation>
        <location evidence="1">Cytoplasm</location>
    </subcellularLocation>
</comment>
<comment type="similarity">
    <text evidence="1">Belongs to the eukaryotic ribosomal protein eS1 family.</text>
</comment>
<protein>
    <recommendedName>
        <fullName evidence="1">Small ribosomal subunit protein eS1</fullName>
    </recommendedName>
    <alternativeName>
        <fullName evidence="3">40S ribosomal protein S3a</fullName>
    </alternativeName>
</protein>